<name>PLSX_STAAW</name>
<comment type="function">
    <text evidence="1">Catalyzes the reversible formation of acyl-phosphate (acyl-PO(4)) from acyl-[acyl-carrier-protein] (acyl-ACP). This enzyme utilizes acyl-ACP as fatty acyl donor, but not acyl-CoA.</text>
</comment>
<comment type="catalytic activity">
    <reaction evidence="1">
        <text>a fatty acyl-[ACP] + phosphate = an acyl phosphate + holo-[ACP]</text>
        <dbReference type="Rhea" id="RHEA:42292"/>
        <dbReference type="Rhea" id="RHEA-COMP:9685"/>
        <dbReference type="Rhea" id="RHEA-COMP:14125"/>
        <dbReference type="ChEBI" id="CHEBI:43474"/>
        <dbReference type="ChEBI" id="CHEBI:59918"/>
        <dbReference type="ChEBI" id="CHEBI:64479"/>
        <dbReference type="ChEBI" id="CHEBI:138651"/>
        <dbReference type="EC" id="2.3.1.274"/>
    </reaction>
</comment>
<comment type="pathway">
    <text evidence="1">Lipid metabolism; phospholipid metabolism.</text>
</comment>
<comment type="subunit">
    <text evidence="1">Homodimer. Probably interacts with PlsY.</text>
</comment>
<comment type="subcellular location">
    <subcellularLocation>
        <location evidence="1">Cytoplasm</location>
    </subcellularLocation>
    <text evidence="1">Associated with the membrane possibly through PlsY.</text>
</comment>
<comment type="similarity">
    <text evidence="1">Belongs to the PlsX family.</text>
</comment>
<evidence type="ECO:0000255" key="1">
    <source>
        <dbReference type="HAMAP-Rule" id="MF_00019"/>
    </source>
</evidence>
<reference key="1">
    <citation type="journal article" date="2002" name="Lancet">
        <title>Genome and virulence determinants of high virulence community-acquired MRSA.</title>
        <authorList>
            <person name="Baba T."/>
            <person name="Takeuchi F."/>
            <person name="Kuroda M."/>
            <person name="Yuzawa H."/>
            <person name="Aoki K."/>
            <person name="Oguchi A."/>
            <person name="Nagai Y."/>
            <person name="Iwama N."/>
            <person name="Asano K."/>
            <person name="Naimi T."/>
            <person name="Kuroda H."/>
            <person name="Cui L."/>
            <person name="Yamamoto K."/>
            <person name="Hiramatsu K."/>
        </authorList>
    </citation>
    <scope>NUCLEOTIDE SEQUENCE [LARGE SCALE GENOMIC DNA]</scope>
    <source>
        <strain>MW2</strain>
    </source>
</reference>
<protein>
    <recommendedName>
        <fullName evidence="1">Phosphate acyltransferase</fullName>
        <ecNumber evidence="1">2.3.1.274</ecNumber>
    </recommendedName>
    <alternativeName>
        <fullName evidence="1">Acyl-ACP phosphotransacylase</fullName>
    </alternativeName>
    <alternativeName>
        <fullName evidence="1">Acyl-[acyl-carrier-protein]--phosphate acyltransferase</fullName>
    </alternativeName>
    <alternativeName>
        <fullName evidence="1">Phosphate-acyl-ACP acyltransferase</fullName>
    </alternativeName>
</protein>
<feature type="chain" id="PRO_0000189940" description="Phosphate acyltransferase">
    <location>
        <begin position="1"/>
        <end position="328"/>
    </location>
</feature>
<proteinExistence type="inferred from homology"/>
<dbReference type="EC" id="2.3.1.274" evidence="1"/>
<dbReference type="EMBL" id="BA000033">
    <property type="protein sequence ID" value="BAB94977.1"/>
    <property type="molecule type" value="Genomic_DNA"/>
</dbReference>
<dbReference type="RefSeq" id="WP_000239748.1">
    <property type="nucleotide sequence ID" value="NC_003923.1"/>
</dbReference>
<dbReference type="SMR" id="Q8NX10"/>
<dbReference type="KEGG" id="sam:MW1112"/>
<dbReference type="HOGENOM" id="CLU_039379_1_1_9"/>
<dbReference type="UniPathway" id="UPA00085"/>
<dbReference type="GO" id="GO:0005737">
    <property type="term" value="C:cytoplasm"/>
    <property type="evidence" value="ECO:0007669"/>
    <property type="project" value="UniProtKB-SubCell"/>
</dbReference>
<dbReference type="GO" id="GO:0043811">
    <property type="term" value="F:phosphate:acyl-[acyl carrier protein] acyltransferase activity"/>
    <property type="evidence" value="ECO:0007669"/>
    <property type="project" value="UniProtKB-UniRule"/>
</dbReference>
<dbReference type="GO" id="GO:0006633">
    <property type="term" value="P:fatty acid biosynthetic process"/>
    <property type="evidence" value="ECO:0007669"/>
    <property type="project" value="UniProtKB-UniRule"/>
</dbReference>
<dbReference type="GO" id="GO:0008654">
    <property type="term" value="P:phospholipid biosynthetic process"/>
    <property type="evidence" value="ECO:0007669"/>
    <property type="project" value="UniProtKB-KW"/>
</dbReference>
<dbReference type="Gene3D" id="3.40.718.10">
    <property type="entry name" value="Isopropylmalate Dehydrogenase"/>
    <property type="match status" value="1"/>
</dbReference>
<dbReference type="HAMAP" id="MF_00019">
    <property type="entry name" value="PlsX"/>
    <property type="match status" value="1"/>
</dbReference>
<dbReference type="InterPro" id="IPR003664">
    <property type="entry name" value="FA_synthesis"/>
</dbReference>
<dbReference type="InterPro" id="IPR012281">
    <property type="entry name" value="Phospholipid_synth_PlsX-like"/>
</dbReference>
<dbReference type="NCBIfam" id="TIGR00182">
    <property type="entry name" value="plsX"/>
    <property type="match status" value="1"/>
</dbReference>
<dbReference type="PANTHER" id="PTHR30100">
    <property type="entry name" value="FATTY ACID/PHOSPHOLIPID SYNTHESIS PROTEIN PLSX"/>
    <property type="match status" value="1"/>
</dbReference>
<dbReference type="PANTHER" id="PTHR30100:SF1">
    <property type="entry name" value="PHOSPHATE ACYLTRANSFERASE"/>
    <property type="match status" value="1"/>
</dbReference>
<dbReference type="Pfam" id="PF02504">
    <property type="entry name" value="FA_synthesis"/>
    <property type="match status" value="1"/>
</dbReference>
<dbReference type="PIRSF" id="PIRSF002465">
    <property type="entry name" value="Phsphlp_syn_PlsX"/>
    <property type="match status" value="1"/>
</dbReference>
<dbReference type="SUPFAM" id="SSF53659">
    <property type="entry name" value="Isocitrate/Isopropylmalate dehydrogenase-like"/>
    <property type="match status" value="1"/>
</dbReference>
<sequence length="328" mass="35422">MVKLAIDMMGGDNAPDIVLEAVQKAVEDFKDLEIILFGDEKKYNLNHERIEFRHCSEKIEMEDEPVRAIKRKKDSSMVKMAEAVKSGEADGCVSAGNTGALMSAGLFIVGRIKGVARPALVVTLPTIDGKGFVFLDVGANADAKPEHLLQYAQLGDIYAQKIRGIDNPKISLLNIGTEPAKGNSLTKKSYELLNQDHSLNFVGNIEAKTLMDGDTDVVVTDGYTGNMVLKNLEGTAKSIGKMLKDTIMSSTKNKLAGAILKKDLAEFAKKMDYSEYGGSVLLGLEGTVVKAHGSSNAKAFYSAIRQAKIAGEQNIVQTMKETVGESNE</sequence>
<keyword id="KW-0963">Cytoplasm</keyword>
<keyword id="KW-0444">Lipid biosynthesis</keyword>
<keyword id="KW-0443">Lipid metabolism</keyword>
<keyword id="KW-0594">Phospholipid biosynthesis</keyword>
<keyword id="KW-1208">Phospholipid metabolism</keyword>
<keyword id="KW-0808">Transferase</keyword>
<organism>
    <name type="scientific">Staphylococcus aureus (strain MW2)</name>
    <dbReference type="NCBI Taxonomy" id="196620"/>
    <lineage>
        <taxon>Bacteria</taxon>
        <taxon>Bacillati</taxon>
        <taxon>Bacillota</taxon>
        <taxon>Bacilli</taxon>
        <taxon>Bacillales</taxon>
        <taxon>Staphylococcaceae</taxon>
        <taxon>Staphylococcus</taxon>
    </lineage>
</organism>
<gene>
    <name evidence="1" type="primary">plsX</name>
    <name type="ordered locus">MW1112</name>
</gene>
<accession>Q8NX10</accession>